<sequence>MSTNPKPTFRRILLKLSGEALMGDEGFGIDPKVLDRMAQEVKELVELGIQVGVVIGGGNLFRGEGLAKAGMNRVVGDHMGMLATVMNGLAMRDALHRAYVNARLMSAIPLKGVCDDYNWAEAISLLKSGRVVIFAAGTGNPFCTTDSAACLRGIEIEAEVVLKGTKVDGVYSDDPMKNPDAVKYDELSYSEILEKELKVMDLAAFTMARDHDMPILVFNMNKPGALRRVIMGEEEGTLIRAKKVI</sequence>
<reference key="1">
    <citation type="submission" date="2006-12" db="EMBL/GenBank/DDBJ databases">
        <title>Complete sequence of Shewanella sp. W3-18-1.</title>
        <authorList>
            <consortium name="US DOE Joint Genome Institute"/>
            <person name="Copeland A."/>
            <person name="Lucas S."/>
            <person name="Lapidus A."/>
            <person name="Barry K."/>
            <person name="Detter J.C."/>
            <person name="Glavina del Rio T."/>
            <person name="Hammon N."/>
            <person name="Israni S."/>
            <person name="Dalin E."/>
            <person name="Tice H."/>
            <person name="Pitluck S."/>
            <person name="Chain P."/>
            <person name="Malfatti S."/>
            <person name="Shin M."/>
            <person name="Vergez L."/>
            <person name="Schmutz J."/>
            <person name="Larimer F."/>
            <person name="Land M."/>
            <person name="Hauser L."/>
            <person name="Kyrpides N."/>
            <person name="Lykidis A."/>
            <person name="Tiedje J."/>
            <person name="Richardson P."/>
        </authorList>
    </citation>
    <scope>NUCLEOTIDE SEQUENCE [LARGE SCALE GENOMIC DNA]</scope>
    <source>
        <strain>W3-18-1</strain>
    </source>
</reference>
<dbReference type="EC" id="2.7.4.22" evidence="1"/>
<dbReference type="EMBL" id="CP000503">
    <property type="protein sequence ID" value="ABM25570.1"/>
    <property type="molecule type" value="Genomic_DNA"/>
</dbReference>
<dbReference type="RefSeq" id="WP_011790026.1">
    <property type="nucleotide sequence ID" value="NC_008750.1"/>
</dbReference>
<dbReference type="SMR" id="A1RLM5"/>
<dbReference type="KEGG" id="shw:Sputw3181_2753"/>
<dbReference type="HOGENOM" id="CLU_033861_0_0_6"/>
<dbReference type="UniPathway" id="UPA00159">
    <property type="reaction ID" value="UER00275"/>
</dbReference>
<dbReference type="Proteomes" id="UP000002597">
    <property type="component" value="Chromosome"/>
</dbReference>
<dbReference type="GO" id="GO:0005829">
    <property type="term" value="C:cytosol"/>
    <property type="evidence" value="ECO:0007669"/>
    <property type="project" value="TreeGrafter"/>
</dbReference>
<dbReference type="GO" id="GO:0005524">
    <property type="term" value="F:ATP binding"/>
    <property type="evidence" value="ECO:0007669"/>
    <property type="project" value="UniProtKB-KW"/>
</dbReference>
<dbReference type="GO" id="GO:0033862">
    <property type="term" value="F:UMP kinase activity"/>
    <property type="evidence" value="ECO:0007669"/>
    <property type="project" value="UniProtKB-EC"/>
</dbReference>
<dbReference type="GO" id="GO:0044210">
    <property type="term" value="P:'de novo' CTP biosynthetic process"/>
    <property type="evidence" value="ECO:0007669"/>
    <property type="project" value="UniProtKB-UniRule"/>
</dbReference>
<dbReference type="GO" id="GO:0006225">
    <property type="term" value="P:UDP biosynthetic process"/>
    <property type="evidence" value="ECO:0007669"/>
    <property type="project" value="TreeGrafter"/>
</dbReference>
<dbReference type="CDD" id="cd04254">
    <property type="entry name" value="AAK_UMPK-PyrH-Ec"/>
    <property type="match status" value="1"/>
</dbReference>
<dbReference type="FunFam" id="3.40.1160.10:FF:000001">
    <property type="entry name" value="Uridylate kinase"/>
    <property type="match status" value="1"/>
</dbReference>
<dbReference type="Gene3D" id="3.40.1160.10">
    <property type="entry name" value="Acetylglutamate kinase-like"/>
    <property type="match status" value="1"/>
</dbReference>
<dbReference type="HAMAP" id="MF_01220_B">
    <property type="entry name" value="PyrH_B"/>
    <property type="match status" value="1"/>
</dbReference>
<dbReference type="InterPro" id="IPR036393">
    <property type="entry name" value="AceGlu_kinase-like_sf"/>
</dbReference>
<dbReference type="InterPro" id="IPR001048">
    <property type="entry name" value="Asp/Glu/Uridylate_kinase"/>
</dbReference>
<dbReference type="InterPro" id="IPR011817">
    <property type="entry name" value="Uridylate_kinase"/>
</dbReference>
<dbReference type="InterPro" id="IPR015963">
    <property type="entry name" value="Uridylate_kinase_bac"/>
</dbReference>
<dbReference type="NCBIfam" id="TIGR02075">
    <property type="entry name" value="pyrH_bact"/>
    <property type="match status" value="1"/>
</dbReference>
<dbReference type="PANTHER" id="PTHR42833">
    <property type="entry name" value="URIDYLATE KINASE"/>
    <property type="match status" value="1"/>
</dbReference>
<dbReference type="PANTHER" id="PTHR42833:SF4">
    <property type="entry name" value="URIDYLATE KINASE PUMPKIN, CHLOROPLASTIC"/>
    <property type="match status" value="1"/>
</dbReference>
<dbReference type="Pfam" id="PF00696">
    <property type="entry name" value="AA_kinase"/>
    <property type="match status" value="1"/>
</dbReference>
<dbReference type="PIRSF" id="PIRSF005650">
    <property type="entry name" value="Uridylate_kin"/>
    <property type="match status" value="1"/>
</dbReference>
<dbReference type="SUPFAM" id="SSF53633">
    <property type="entry name" value="Carbamate kinase-like"/>
    <property type="match status" value="1"/>
</dbReference>
<proteinExistence type="inferred from homology"/>
<organism>
    <name type="scientific">Shewanella sp. (strain W3-18-1)</name>
    <dbReference type="NCBI Taxonomy" id="351745"/>
    <lineage>
        <taxon>Bacteria</taxon>
        <taxon>Pseudomonadati</taxon>
        <taxon>Pseudomonadota</taxon>
        <taxon>Gammaproteobacteria</taxon>
        <taxon>Alteromonadales</taxon>
        <taxon>Shewanellaceae</taxon>
        <taxon>Shewanella</taxon>
    </lineage>
</organism>
<accession>A1RLM5</accession>
<comment type="function">
    <text evidence="1">Catalyzes the reversible phosphorylation of UMP to UDP.</text>
</comment>
<comment type="catalytic activity">
    <reaction evidence="1">
        <text>UMP + ATP = UDP + ADP</text>
        <dbReference type="Rhea" id="RHEA:24400"/>
        <dbReference type="ChEBI" id="CHEBI:30616"/>
        <dbReference type="ChEBI" id="CHEBI:57865"/>
        <dbReference type="ChEBI" id="CHEBI:58223"/>
        <dbReference type="ChEBI" id="CHEBI:456216"/>
        <dbReference type="EC" id="2.7.4.22"/>
    </reaction>
</comment>
<comment type="activity regulation">
    <text evidence="1">Allosterically activated by GTP. Inhibited by UTP.</text>
</comment>
<comment type="pathway">
    <text evidence="1">Pyrimidine metabolism; CTP biosynthesis via de novo pathway; UDP from UMP (UMPK route): step 1/1.</text>
</comment>
<comment type="subunit">
    <text evidence="1">Homohexamer.</text>
</comment>
<comment type="subcellular location">
    <subcellularLocation>
        <location evidence="1">Cytoplasm</location>
    </subcellularLocation>
</comment>
<comment type="similarity">
    <text evidence="1">Belongs to the UMP kinase family.</text>
</comment>
<gene>
    <name evidence="1" type="primary">pyrH</name>
    <name type="ordered locus">Sputw3181_2753</name>
</gene>
<evidence type="ECO:0000255" key="1">
    <source>
        <dbReference type="HAMAP-Rule" id="MF_01220"/>
    </source>
</evidence>
<protein>
    <recommendedName>
        <fullName evidence="1">Uridylate kinase</fullName>
        <shortName evidence="1">UK</shortName>
        <ecNumber evidence="1">2.7.4.22</ecNumber>
    </recommendedName>
    <alternativeName>
        <fullName evidence="1">Uridine monophosphate kinase</fullName>
        <shortName evidence="1">UMP kinase</shortName>
        <shortName evidence="1">UMPK</shortName>
    </alternativeName>
</protein>
<feature type="chain" id="PRO_1000054015" description="Uridylate kinase">
    <location>
        <begin position="1"/>
        <end position="245"/>
    </location>
</feature>
<feature type="region of interest" description="Involved in allosteric activation by GTP" evidence="1">
    <location>
        <begin position="23"/>
        <end position="28"/>
    </location>
</feature>
<feature type="binding site" evidence="1">
    <location>
        <begin position="15"/>
        <end position="18"/>
    </location>
    <ligand>
        <name>ATP</name>
        <dbReference type="ChEBI" id="CHEBI:30616"/>
    </ligand>
</feature>
<feature type="binding site" evidence="1">
    <location>
        <position position="57"/>
    </location>
    <ligand>
        <name>UMP</name>
        <dbReference type="ChEBI" id="CHEBI:57865"/>
    </ligand>
</feature>
<feature type="binding site" evidence="1">
    <location>
        <position position="58"/>
    </location>
    <ligand>
        <name>ATP</name>
        <dbReference type="ChEBI" id="CHEBI:30616"/>
    </ligand>
</feature>
<feature type="binding site" evidence="1">
    <location>
        <position position="62"/>
    </location>
    <ligand>
        <name>ATP</name>
        <dbReference type="ChEBI" id="CHEBI:30616"/>
    </ligand>
</feature>
<feature type="binding site" evidence="1">
    <location>
        <position position="77"/>
    </location>
    <ligand>
        <name>UMP</name>
        <dbReference type="ChEBI" id="CHEBI:57865"/>
    </ligand>
</feature>
<feature type="binding site" evidence="1">
    <location>
        <begin position="138"/>
        <end position="145"/>
    </location>
    <ligand>
        <name>UMP</name>
        <dbReference type="ChEBI" id="CHEBI:57865"/>
    </ligand>
</feature>
<feature type="binding site" evidence="1">
    <location>
        <position position="165"/>
    </location>
    <ligand>
        <name>ATP</name>
        <dbReference type="ChEBI" id="CHEBI:30616"/>
    </ligand>
</feature>
<feature type="binding site" evidence="1">
    <location>
        <position position="171"/>
    </location>
    <ligand>
        <name>ATP</name>
        <dbReference type="ChEBI" id="CHEBI:30616"/>
    </ligand>
</feature>
<feature type="binding site" evidence="1">
    <location>
        <position position="174"/>
    </location>
    <ligand>
        <name>ATP</name>
        <dbReference type="ChEBI" id="CHEBI:30616"/>
    </ligand>
</feature>
<name>PYRH_SHESW</name>
<keyword id="KW-0021">Allosteric enzyme</keyword>
<keyword id="KW-0067">ATP-binding</keyword>
<keyword id="KW-0963">Cytoplasm</keyword>
<keyword id="KW-0418">Kinase</keyword>
<keyword id="KW-0547">Nucleotide-binding</keyword>
<keyword id="KW-0665">Pyrimidine biosynthesis</keyword>
<keyword id="KW-0808">Transferase</keyword>